<reference key="1">
    <citation type="journal article" date="2004" name="Proc. Natl. Acad. Sci. U.S.A.">
        <title>The complete genomic sequence of Nocardia farcinica IFM 10152.</title>
        <authorList>
            <person name="Ishikawa J."/>
            <person name="Yamashita A."/>
            <person name="Mikami Y."/>
            <person name="Hoshino Y."/>
            <person name="Kurita H."/>
            <person name="Hotta K."/>
            <person name="Shiba T."/>
            <person name="Hattori M."/>
        </authorList>
    </citation>
    <scope>NUCLEOTIDE SEQUENCE [LARGE SCALE GENOMIC DNA]</scope>
    <source>
        <strain>IFM 10152</strain>
    </source>
</reference>
<accession>Q5Z3P6</accession>
<dbReference type="EC" id="6.1.1.6"/>
<dbReference type="EC" id="2.3.2.3"/>
<dbReference type="EMBL" id="AP006618">
    <property type="protein sequence ID" value="BAD54945.1"/>
    <property type="status" value="ALT_INIT"/>
    <property type="molecule type" value="Genomic_DNA"/>
</dbReference>
<dbReference type="SMR" id="Q5Z3P6"/>
<dbReference type="STRING" id="247156.NFA_1030"/>
<dbReference type="KEGG" id="nfa:NFA_1030"/>
<dbReference type="eggNOG" id="COG1190">
    <property type="taxonomic scope" value="Bacteria"/>
</dbReference>
<dbReference type="eggNOG" id="COG2898">
    <property type="taxonomic scope" value="Bacteria"/>
</dbReference>
<dbReference type="HOGENOM" id="CLU_008255_2_0_11"/>
<dbReference type="Proteomes" id="UP000006820">
    <property type="component" value="Chromosome"/>
</dbReference>
<dbReference type="GO" id="GO:0005829">
    <property type="term" value="C:cytosol"/>
    <property type="evidence" value="ECO:0007669"/>
    <property type="project" value="TreeGrafter"/>
</dbReference>
<dbReference type="GO" id="GO:0005886">
    <property type="term" value="C:plasma membrane"/>
    <property type="evidence" value="ECO:0007669"/>
    <property type="project" value="UniProtKB-SubCell"/>
</dbReference>
<dbReference type="GO" id="GO:0005524">
    <property type="term" value="F:ATP binding"/>
    <property type="evidence" value="ECO:0007669"/>
    <property type="project" value="UniProtKB-UniRule"/>
</dbReference>
<dbReference type="GO" id="GO:0004824">
    <property type="term" value="F:lysine-tRNA ligase activity"/>
    <property type="evidence" value="ECO:0007669"/>
    <property type="project" value="UniProtKB-UniRule"/>
</dbReference>
<dbReference type="GO" id="GO:0000287">
    <property type="term" value="F:magnesium ion binding"/>
    <property type="evidence" value="ECO:0007669"/>
    <property type="project" value="UniProtKB-UniRule"/>
</dbReference>
<dbReference type="GO" id="GO:0050071">
    <property type="term" value="F:phosphatidylglycerol lysyltransferase activity"/>
    <property type="evidence" value="ECO:0007669"/>
    <property type="project" value="UniProtKB-EC"/>
</dbReference>
<dbReference type="GO" id="GO:0000049">
    <property type="term" value="F:tRNA binding"/>
    <property type="evidence" value="ECO:0007669"/>
    <property type="project" value="TreeGrafter"/>
</dbReference>
<dbReference type="GO" id="GO:0006629">
    <property type="term" value="P:lipid metabolic process"/>
    <property type="evidence" value="ECO:0007669"/>
    <property type="project" value="UniProtKB-KW"/>
</dbReference>
<dbReference type="GO" id="GO:0006430">
    <property type="term" value="P:lysyl-tRNA aminoacylation"/>
    <property type="evidence" value="ECO:0007669"/>
    <property type="project" value="UniProtKB-UniRule"/>
</dbReference>
<dbReference type="GO" id="GO:0046677">
    <property type="term" value="P:response to antibiotic"/>
    <property type="evidence" value="ECO:0007669"/>
    <property type="project" value="UniProtKB-KW"/>
</dbReference>
<dbReference type="CDD" id="cd04322">
    <property type="entry name" value="LysRS_N"/>
    <property type="match status" value="1"/>
</dbReference>
<dbReference type="Gene3D" id="3.30.930.10">
    <property type="entry name" value="Bira Bifunctional Protein, Domain 2"/>
    <property type="match status" value="1"/>
</dbReference>
<dbReference type="Gene3D" id="2.40.50.140">
    <property type="entry name" value="Nucleic acid-binding proteins"/>
    <property type="match status" value="1"/>
</dbReference>
<dbReference type="HAMAP" id="MF_00252">
    <property type="entry name" value="Lys_tRNA_synth_class2"/>
    <property type="match status" value="1"/>
</dbReference>
<dbReference type="InterPro" id="IPR004364">
    <property type="entry name" value="Aa-tRNA-synt_II"/>
</dbReference>
<dbReference type="InterPro" id="IPR006195">
    <property type="entry name" value="aa-tRNA-synth_II"/>
</dbReference>
<dbReference type="InterPro" id="IPR045864">
    <property type="entry name" value="aa-tRNA-synth_II/BPL/LPL"/>
</dbReference>
<dbReference type="InterPro" id="IPR024320">
    <property type="entry name" value="LPG_synthase_C"/>
</dbReference>
<dbReference type="InterPro" id="IPR002313">
    <property type="entry name" value="Lys-tRNA-ligase_II"/>
</dbReference>
<dbReference type="InterPro" id="IPR044136">
    <property type="entry name" value="Lys-tRNA-ligase_II_N"/>
</dbReference>
<dbReference type="InterPro" id="IPR018149">
    <property type="entry name" value="Lys-tRNA-synth_II_C"/>
</dbReference>
<dbReference type="InterPro" id="IPR012340">
    <property type="entry name" value="NA-bd_OB-fold"/>
</dbReference>
<dbReference type="InterPro" id="IPR004365">
    <property type="entry name" value="NA-bd_OB_tRNA"/>
</dbReference>
<dbReference type="InterPro" id="IPR031553">
    <property type="entry name" value="tRNA-synt_2_TM"/>
</dbReference>
<dbReference type="NCBIfam" id="TIGR00499">
    <property type="entry name" value="lysS_bact"/>
    <property type="match status" value="1"/>
</dbReference>
<dbReference type="NCBIfam" id="NF001756">
    <property type="entry name" value="PRK00484.1"/>
    <property type="match status" value="1"/>
</dbReference>
<dbReference type="NCBIfam" id="NF002821">
    <property type="entry name" value="PRK02983.1"/>
    <property type="match status" value="1"/>
</dbReference>
<dbReference type="PANTHER" id="PTHR42918:SF15">
    <property type="entry name" value="LYSINE--TRNA LIGASE, CHLOROPLASTIC_MITOCHONDRIAL"/>
    <property type="match status" value="1"/>
</dbReference>
<dbReference type="PANTHER" id="PTHR42918">
    <property type="entry name" value="LYSYL-TRNA SYNTHETASE"/>
    <property type="match status" value="1"/>
</dbReference>
<dbReference type="Pfam" id="PF09924">
    <property type="entry name" value="LPG_synthase_C"/>
    <property type="match status" value="1"/>
</dbReference>
<dbReference type="Pfam" id="PF00152">
    <property type="entry name" value="tRNA-synt_2"/>
    <property type="match status" value="1"/>
</dbReference>
<dbReference type="Pfam" id="PF16995">
    <property type="entry name" value="tRNA-synt_2_TM"/>
    <property type="match status" value="1"/>
</dbReference>
<dbReference type="Pfam" id="PF01336">
    <property type="entry name" value="tRNA_anti-codon"/>
    <property type="match status" value="1"/>
</dbReference>
<dbReference type="PRINTS" id="PR00982">
    <property type="entry name" value="TRNASYNTHLYS"/>
</dbReference>
<dbReference type="SUPFAM" id="SSF55681">
    <property type="entry name" value="Class II aaRS and biotin synthetases"/>
    <property type="match status" value="1"/>
</dbReference>
<dbReference type="SUPFAM" id="SSF50249">
    <property type="entry name" value="Nucleic acid-binding proteins"/>
    <property type="match status" value="1"/>
</dbReference>
<dbReference type="PROSITE" id="PS50862">
    <property type="entry name" value="AA_TRNA_LIGASE_II"/>
    <property type="match status" value="1"/>
</dbReference>
<sequence>MDNPPPTGVAPRHLPPGSVHTGKVTASLSHRRPDSVQDAPPAPVPHRAHGRLREVPHIAGLVLGVFAVACLLWSLSPALRFLTGPPRRFVDDYYFDAPDTNVMWALIVGLLAGAIASRKRIAWWLLVGYLTLFAVANGLRFAAEQNINALVAMIVQVGVVGLLIAAWPEFYTRVRRGAGWKALGVLVGGLAIGCLLGWGLVEVFPGSLPPGWQRPGWAVYRVTAAILVENEHFGGHPRPFVNVLLGLFGAIALLAAVLTLLRSQRAANAMTGLDESAIRGLLEHSDVEDSLGYFATRRDKAVVFAPSGKAAVTYRVELGVCLASGDPVGVREAWPHAIDAWLRLADRFGWTPAVMGASEEGATAYRRAGLSALRLGDEAVLDTRDFSLAGPELRQVRQAANRLRKQGVRVRIRRHREIPSAEFEQIMARADAWRDTETERGFSMALGRLGDPLDADCLLVEAVAADDRVLGMLSLVPWGRTGVSLELMRRDPQGPNGVMELMISQLALNSEQFGITRVSLNFAVFRSVFEEGGRIGAGPVLRLWRGVLLFFSRWWQLEALYRSNVKYQPDWVPRFFLFEERRQLPRVAVASALAEGFLPRLGKDPDASAHTGAQSAVPDTLTGLHADGSPPDWPKPDLLDSGPRRPEQVRVRMAKLDRMTAAGVDAYPVAYPPTHTVAAARRSPRGTTVRVCGRLLRIRDYGGVVFALLRDWSDDIQLVIDRERVGAARSAEFGEYFDLGDLIEVSGQIGRSRSGELSLLAADWRMLGKCLHPLPDKWKGLADPEARVRQRYVDMAINPETRDVLAKRSAVVRSLRESLNSWGYLEVETPILQQVHGGANATPFTTHINAYDLDLYLRIAPELYLKRLCVGGMEKVFELGRTFRNEGVDFSHNPEFTILEAYEAHSDYIRMMHTCRVLIQNAALAANGSMVAMRPGADGALEPVDISGDWPVKTVHGAVSAAVGTEITPRTGVAELRELCDRVGVPYQHGWDEGQIVLEMYEHLVEARTEEPTFYVDFPTSVSPLTRAHRSTPGVTERWDLVAWGVELGTAYSELTDPVEQRRRLTEQSVLAANGDPEAMELDEDFLQALEHAMPPTGGLGMGVDRIVMLITGRSIRETLPFPLVKPR</sequence>
<proteinExistence type="inferred from homology"/>
<evidence type="ECO:0000250" key="1"/>
<evidence type="ECO:0000255" key="2"/>
<evidence type="ECO:0000256" key="3">
    <source>
        <dbReference type="SAM" id="MobiDB-lite"/>
    </source>
</evidence>
<evidence type="ECO:0000305" key="4"/>
<gene>
    <name type="primary">lysX</name>
    <name type="synonym">lysS2</name>
    <name type="ordered locus">NFA_1030</name>
</gene>
<name>LYSX_NOCFA</name>
<keyword id="KW-0030">Aminoacyl-tRNA synthetase</keyword>
<keyword id="KW-0046">Antibiotic resistance</keyword>
<keyword id="KW-0067">ATP-binding</keyword>
<keyword id="KW-1003">Cell membrane</keyword>
<keyword id="KW-0436">Ligase</keyword>
<keyword id="KW-0443">Lipid metabolism</keyword>
<keyword id="KW-0460">Magnesium</keyword>
<keyword id="KW-0472">Membrane</keyword>
<keyword id="KW-0479">Metal-binding</keyword>
<keyword id="KW-0511">Multifunctional enzyme</keyword>
<keyword id="KW-0547">Nucleotide-binding</keyword>
<keyword id="KW-1185">Reference proteome</keyword>
<keyword id="KW-0808">Transferase</keyword>
<keyword id="KW-0812">Transmembrane</keyword>
<keyword id="KW-1133">Transmembrane helix</keyword>
<keyword id="KW-0843">Virulence</keyword>
<organism>
    <name type="scientific">Nocardia farcinica (strain IFM 10152)</name>
    <dbReference type="NCBI Taxonomy" id="247156"/>
    <lineage>
        <taxon>Bacteria</taxon>
        <taxon>Bacillati</taxon>
        <taxon>Actinomycetota</taxon>
        <taxon>Actinomycetes</taxon>
        <taxon>Mycobacteriales</taxon>
        <taxon>Nocardiaceae</taxon>
        <taxon>Nocardia</taxon>
    </lineage>
</organism>
<comment type="function">
    <text evidence="1">Catalyzes the production of L-lysyl-tRNA(Lys)transfer and the transfer of a lysyl group from L-lysyl-tRNA(Lys) to membrane-bound phosphatidylglycerol (PG), which produces lysylphosphatidylglycerol (LPG), one of the components of the bacterial membrane with a positive net charge. LPG synthesis contributes to the resistance to cationic antimicrobial peptides (CAMPs) and likely protects M.tuberculosis against the CAMPs produced by competiting microorganisms (bacteriocins). In fact, the modification of anionic phosphatidylglycerol with positively charged L-lysine results in repulsion of the peptides (By similarity).</text>
</comment>
<comment type="catalytic activity">
    <reaction>
        <text>tRNA(Lys) + L-lysine + ATP = L-lysyl-tRNA(Lys) + AMP + diphosphate</text>
        <dbReference type="Rhea" id="RHEA:20792"/>
        <dbReference type="Rhea" id="RHEA-COMP:9696"/>
        <dbReference type="Rhea" id="RHEA-COMP:9697"/>
        <dbReference type="ChEBI" id="CHEBI:30616"/>
        <dbReference type="ChEBI" id="CHEBI:32551"/>
        <dbReference type="ChEBI" id="CHEBI:33019"/>
        <dbReference type="ChEBI" id="CHEBI:78442"/>
        <dbReference type="ChEBI" id="CHEBI:78529"/>
        <dbReference type="ChEBI" id="CHEBI:456215"/>
        <dbReference type="EC" id="6.1.1.6"/>
    </reaction>
</comment>
<comment type="catalytic activity">
    <reaction>
        <text>L-lysyl-tRNA(Lys) + a 1,2-diacyl-sn-glycero-3-phospho-(1'-sn-glycerol) = a 1,2-diacyl-sn-glycero-3-phospho-1'-(3'-O-L-lysyl)-sn-glycerol + tRNA(Lys)</text>
        <dbReference type="Rhea" id="RHEA:10668"/>
        <dbReference type="Rhea" id="RHEA-COMP:9696"/>
        <dbReference type="Rhea" id="RHEA-COMP:9697"/>
        <dbReference type="ChEBI" id="CHEBI:64716"/>
        <dbReference type="ChEBI" id="CHEBI:75792"/>
        <dbReference type="ChEBI" id="CHEBI:78442"/>
        <dbReference type="ChEBI" id="CHEBI:78529"/>
        <dbReference type="EC" id="2.3.2.3"/>
    </reaction>
</comment>
<comment type="cofactor">
    <cofactor evidence="1">
        <name>Mg(2+)</name>
        <dbReference type="ChEBI" id="CHEBI:18420"/>
    </cofactor>
    <text evidence="1">Binds 3 Mg(2+) ions per subunit.</text>
</comment>
<comment type="subcellular location">
    <subcellularLocation>
        <location evidence="4">Cell membrane</location>
        <topology evidence="4">Multi-pass membrane protein</topology>
    </subcellularLocation>
</comment>
<comment type="similarity">
    <text evidence="4">In the N-terminal section; belongs to the LPG synthetase family.</text>
</comment>
<comment type="similarity">
    <text evidence="4">In the C-terminal section; belongs to the class-II aminoacyl-tRNA synthetase family.</text>
</comment>
<comment type="sequence caution" evidence="4">
    <conflict type="erroneous initiation">
        <sequence resource="EMBL-CDS" id="BAD54945"/>
    </conflict>
    <text>Truncated N-terminus.</text>
</comment>
<feature type="chain" id="PRO_0000394333" description="Lysylphosphatidylglycerol biosynthesis bifunctional protein LysX">
    <location>
        <begin position="1"/>
        <end position="1128"/>
    </location>
</feature>
<feature type="transmembrane region" description="Helical" evidence="2">
    <location>
        <begin position="55"/>
        <end position="75"/>
    </location>
</feature>
<feature type="transmembrane region" description="Helical" evidence="2">
    <location>
        <begin position="97"/>
        <end position="117"/>
    </location>
</feature>
<feature type="transmembrane region" description="Helical" evidence="2">
    <location>
        <begin position="121"/>
        <end position="141"/>
    </location>
</feature>
<feature type="transmembrane region" description="Helical" evidence="2">
    <location>
        <begin position="147"/>
        <end position="167"/>
    </location>
</feature>
<feature type="transmembrane region" description="Helical" evidence="2">
    <location>
        <begin position="184"/>
        <end position="204"/>
    </location>
</feature>
<feature type="transmembrane region" description="Helical" evidence="2">
    <location>
        <begin position="240"/>
        <end position="260"/>
    </location>
</feature>
<feature type="region of interest" description="Phosphatidylglycerol lysyltransferase">
    <location>
        <begin position="1"/>
        <end position="632"/>
    </location>
</feature>
<feature type="region of interest" description="Disordered" evidence="3">
    <location>
        <begin position="1"/>
        <end position="47"/>
    </location>
</feature>
<feature type="region of interest" description="Disordered" evidence="3">
    <location>
        <begin position="619"/>
        <end position="644"/>
    </location>
</feature>
<feature type="region of interest" description="Lysine--tRNA ligase">
    <location>
        <begin position="633"/>
        <end position="1128"/>
    </location>
</feature>
<feature type="compositionally biased region" description="Basic and acidic residues" evidence="3">
    <location>
        <begin position="634"/>
        <end position="644"/>
    </location>
</feature>
<feature type="binding site" evidence="1">
    <location>
        <position position="1040"/>
    </location>
    <ligand>
        <name>Mg(2+)</name>
        <dbReference type="ChEBI" id="CHEBI:18420"/>
        <label>1</label>
    </ligand>
</feature>
<feature type="binding site" evidence="1">
    <location>
        <position position="1047"/>
    </location>
    <ligand>
        <name>Mg(2+)</name>
        <dbReference type="ChEBI" id="CHEBI:18420"/>
        <label>1</label>
    </ligand>
</feature>
<feature type="binding site" evidence="1">
    <location>
        <position position="1047"/>
    </location>
    <ligand>
        <name>Mg(2+)</name>
        <dbReference type="ChEBI" id="CHEBI:18420"/>
        <label>2</label>
    </ligand>
</feature>
<protein>
    <recommendedName>
        <fullName>Lysylphosphatidylglycerol biosynthesis bifunctional protein LysX</fullName>
    </recommendedName>
    <domain>
        <recommendedName>
            <fullName>Lysine--tRNA ligase</fullName>
            <ecNumber>6.1.1.6</ecNumber>
        </recommendedName>
        <alternativeName>
            <fullName>Lysyl-tRNA synthetase</fullName>
            <shortName>LysRS</shortName>
        </alternativeName>
    </domain>
    <domain>
        <recommendedName>
            <fullName>Phosphatidylglycerol lysyltransferase</fullName>
            <ecNumber>2.3.2.3</ecNumber>
        </recommendedName>
        <alternativeName>
            <fullName>Lysylphosphatidylglycerol synthetase</fullName>
            <shortName>LPG synthetase</shortName>
        </alternativeName>
    </domain>
</protein>